<comment type="similarity">
    <text evidence="1">Belongs to the UPF0482 family.</text>
</comment>
<dbReference type="EMBL" id="CP000026">
    <property type="protein sequence ID" value="AAV77297.1"/>
    <property type="molecule type" value="Genomic_DNA"/>
</dbReference>
<dbReference type="RefSeq" id="WP_001066440.1">
    <property type="nucleotide sequence ID" value="NC_006511.1"/>
</dbReference>
<dbReference type="KEGG" id="spt:SPA1352"/>
<dbReference type="HOGENOM" id="CLU_167574_0_0_6"/>
<dbReference type="Proteomes" id="UP000008185">
    <property type="component" value="Chromosome"/>
</dbReference>
<dbReference type="HAMAP" id="MF_01581">
    <property type="entry name" value="UPF0482"/>
    <property type="match status" value="1"/>
</dbReference>
<dbReference type="InterPro" id="IPR009700">
    <property type="entry name" value="DUF1283"/>
</dbReference>
<dbReference type="NCBIfam" id="NF010180">
    <property type="entry name" value="PRK13659.1"/>
    <property type="match status" value="1"/>
</dbReference>
<dbReference type="Pfam" id="PF06932">
    <property type="entry name" value="DUF1283"/>
    <property type="match status" value="1"/>
</dbReference>
<evidence type="ECO:0000255" key="1">
    <source>
        <dbReference type="HAMAP-Rule" id="MF_01581"/>
    </source>
</evidence>
<name>YNFB_SALPA</name>
<proteinExistence type="inferred from homology"/>
<gene>
    <name evidence="1" type="primary">ynfB</name>
    <name type="ordered locus">SPA1352</name>
</gene>
<accession>Q5PHH7</accession>
<sequence>MNNTLSKRLCLTAMLTLAAVVYTTSAFAETSKLVIESGDSAQSRQEAAMEKEQWNDTRSLRQKVNTRAEKEWDKADAAFDNRDKCEQSANINAYWEPNTLRCLDRRTGRVITP</sequence>
<feature type="signal peptide" evidence="1">
    <location>
        <begin position="1"/>
        <end position="28"/>
    </location>
</feature>
<feature type="chain" id="PRO_0000300227" description="UPF0482 protein YnfB">
    <location>
        <begin position="29"/>
        <end position="113"/>
    </location>
</feature>
<organism>
    <name type="scientific">Salmonella paratyphi A (strain ATCC 9150 / SARB42)</name>
    <dbReference type="NCBI Taxonomy" id="295319"/>
    <lineage>
        <taxon>Bacteria</taxon>
        <taxon>Pseudomonadati</taxon>
        <taxon>Pseudomonadota</taxon>
        <taxon>Gammaproteobacteria</taxon>
        <taxon>Enterobacterales</taxon>
        <taxon>Enterobacteriaceae</taxon>
        <taxon>Salmonella</taxon>
    </lineage>
</organism>
<reference key="1">
    <citation type="journal article" date="2004" name="Nat. Genet.">
        <title>Comparison of genome degradation in Paratyphi A and Typhi, human-restricted serovars of Salmonella enterica that cause typhoid.</title>
        <authorList>
            <person name="McClelland M."/>
            <person name="Sanderson K.E."/>
            <person name="Clifton S.W."/>
            <person name="Latreille P."/>
            <person name="Porwollik S."/>
            <person name="Sabo A."/>
            <person name="Meyer R."/>
            <person name="Bieri T."/>
            <person name="Ozersky P."/>
            <person name="McLellan M."/>
            <person name="Harkins C.R."/>
            <person name="Wang C."/>
            <person name="Nguyen C."/>
            <person name="Berghoff A."/>
            <person name="Elliott G."/>
            <person name="Kohlberg S."/>
            <person name="Strong C."/>
            <person name="Du F."/>
            <person name="Carter J."/>
            <person name="Kremizki C."/>
            <person name="Layman D."/>
            <person name="Leonard S."/>
            <person name="Sun H."/>
            <person name="Fulton L."/>
            <person name="Nash W."/>
            <person name="Miner T."/>
            <person name="Minx P."/>
            <person name="Delehaunty K."/>
            <person name="Fronick C."/>
            <person name="Magrini V."/>
            <person name="Nhan M."/>
            <person name="Warren W."/>
            <person name="Florea L."/>
            <person name="Spieth J."/>
            <person name="Wilson R.K."/>
        </authorList>
    </citation>
    <scope>NUCLEOTIDE SEQUENCE [LARGE SCALE GENOMIC DNA]</scope>
    <source>
        <strain>ATCC 9150 / SARB42</strain>
    </source>
</reference>
<keyword id="KW-0732">Signal</keyword>
<protein>
    <recommendedName>
        <fullName evidence="1">UPF0482 protein YnfB</fullName>
    </recommendedName>
</protein>